<sequence length="301" mass="33356">MFFRNLTLFRFPTTLDFSQIDTLLPPVQLKPVGPLEMSSRGFISPFGRDEQGVLSHRLEDFLWLTVGGEDKILPGAVVNDLLERKVAEIEEKEGRRPGGKARKRLKDDLIHELLPRAFVKSSRTDAILDLQHGYIAVNSSSRKSGENVMSEIRGALGSFPALPLNAEVAPRAILTGWIAGEPLPEGLSLGEECEMKDPIEGGAVVKCQHQELRGDEIDKHLEAGKQVTKLALVLDDNLSFVLGDDLVIRKLKFLDGALDQLEHSEDDGARAELDARFTLMSAEIRRLFLLLETALKLSKAE</sequence>
<comment type="function">
    <text evidence="1">May be involved in recombination.</text>
</comment>
<comment type="subcellular location">
    <subcellularLocation>
        <location evidence="1">Cytoplasm</location>
        <location evidence="1">Nucleoid</location>
    </subcellularLocation>
</comment>
<comment type="similarity">
    <text evidence="1">Belongs to the RdgC family.</text>
</comment>
<reference key="1">
    <citation type="journal article" date="2005" name="Jpn. Agric. Res. Q.">
        <title>Genome sequence of Xanthomonas oryzae pv. oryzae suggests contribution of large numbers of effector genes and insertion sequences to its race diversity.</title>
        <authorList>
            <person name="Ochiai H."/>
            <person name="Inoue Y."/>
            <person name="Takeya M."/>
            <person name="Sasaki A."/>
            <person name="Kaku H."/>
        </authorList>
    </citation>
    <scope>NUCLEOTIDE SEQUENCE [LARGE SCALE GENOMIC DNA]</scope>
    <source>
        <strain>MAFF 311018</strain>
    </source>
</reference>
<gene>
    <name evidence="1" type="primary">rdgC</name>
    <name type="ordered locus">XOO4158</name>
</gene>
<feature type="chain" id="PRO_1000021245" description="Recombination-associated protein RdgC">
    <location>
        <begin position="1"/>
        <end position="301"/>
    </location>
</feature>
<dbReference type="EMBL" id="AP008229">
    <property type="protein sequence ID" value="BAE70913.1"/>
    <property type="molecule type" value="Genomic_DNA"/>
</dbReference>
<dbReference type="RefSeq" id="WP_011409720.1">
    <property type="nucleotide sequence ID" value="NC_007705.1"/>
</dbReference>
<dbReference type="SMR" id="Q2NXR4"/>
<dbReference type="KEGG" id="xom:XOO4158"/>
<dbReference type="HOGENOM" id="CLU_052038_1_1_6"/>
<dbReference type="GO" id="GO:0043590">
    <property type="term" value="C:bacterial nucleoid"/>
    <property type="evidence" value="ECO:0007669"/>
    <property type="project" value="TreeGrafter"/>
</dbReference>
<dbReference type="GO" id="GO:0005737">
    <property type="term" value="C:cytoplasm"/>
    <property type="evidence" value="ECO:0007669"/>
    <property type="project" value="UniProtKB-UniRule"/>
</dbReference>
<dbReference type="GO" id="GO:0003690">
    <property type="term" value="F:double-stranded DNA binding"/>
    <property type="evidence" value="ECO:0007669"/>
    <property type="project" value="TreeGrafter"/>
</dbReference>
<dbReference type="GO" id="GO:0006310">
    <property type="term" value="P:DNA recombination"/>
    <property type="evidence" value="ECO:0007669"/>
    <property type="project" value="UniProtKB-UniRule"/>
</dbReference>
<dbReference type="GO" id="GO:0000018">
    <property type="term" value="P:regulation of DNA recombination"/>
    <property type="evidence" value="ECO:0007669"/>
    <property type="project" value="TreeGrafter"/>
</dbReference>
<dbReference type="HAMAP" id="MF_00194">
    <property type="entry name" value="RdgC"/>
    <property type="match status" value="1"/>
</dbReference>
<dbReference type="InterPro" id="IPR007476">
    <property type="entry name" value="RdgC"/>
</dbReference>
<dbReference type="NCBIfam" id="NF001464">
    <property type="entry name" value="PRK00321.1-5"/>
    <property type="match status" value="1"/>
</dbReference>
<dbReference type="NCBIfam" id="NF001465">
    <property type="entry name" value="PRK00321.1-6"/>
    <property type="match status" value="1"/>
</dbReference>
<dbReference type="PANTHER" id="PTHR38103">
    <property type="entry name" value="RECOMBINATION-ASSOCIATED PROTEIN RDGC"/>
    <property type="match status" value="1"/>
</dbReference>
<dbReference type="PANTHER" id="PTHR38103:SF1">
    <property type="entry name" value="RECOMBINATION-ASSOCIATED PROTEIN RDGC"/>
    <property type="match status" value="1"/>
</dbReference>
<dbReference type="Pfam" id="PF04381">
    <property type="entry name" value="RdgC"/>
    <property type="match status" value="1"/>
</dbReference>
<keyword id="KW-0963">Cytoplasm</keyword>
<keyword id="KW-0233">DNA recombination</keyword>
<proteinExistence type="inferred from homology"/>
<evidence type="ECO:0000255" key="1">
    <source>
        <dbReference type="HAMAP-Rule" id="MF_00194"/>
    </source>
</evidence>
<organism>
    <name type="scientific">Xanthomonas oryzae pv. oryzae (strain MAFF 311018)</name>
    <dbReference type="NCBI Taxonomy" id="342109"/>
    <lineage>
        <taxon>Bacteria</taxon>
        <taxon>Pseudomonadati</taxon>
        <taxon>Pseudomonadota</taxon>
        <taxon>Gammaproteobacteria</taxon>
        <taxon>Lysobacterales</taxon>
        <taxon>Lysobacteraceae</taxon>
        <taxon>Xanthomonas</taxon>
    </lineage>
</organism>
<protein>
    <recommendedName>
        <fullName evidence="1">Recombination-associated protein RdgC</fullName>
    </recommendedName>
</protein>
<name>RDGC_XANOM</name>
<accession>Q2NXR4</accession>